<organism>
    <name type="scientific">Streptococcus pneumoniae (strain ATCC BAA-255 / R6)</name>
    <dbReference type="NCBI Taxonomy" id="171101"/>
    <lineage>
        <taxon>Bacteria</taxon>
        <taxon>Bacillati</taxon>
        <taxon>Bacillota</taxon>
        <taxon>Bacilli</taxon>
        <taxon>Lactobacillales</taxon>
        <taxon>Streptococcaceae</taxon>
        <taxon>Streptococcus</taxon>
    </lineage>
</organism>
<sequence>MPELPEVETVCRGLEKLIIGKKISSIEIRYPKMIKTDLEEFQRELPSQIIESMGRRGKYLLFYLTDKVLISHLRMEGKYFYYPDQGPERKHAHVFFHFEDGGTLVYEDVRKFGTMELLVPDLLDAYFISKKLGPEPSEQDFDLQVFQAALAKSKKPIKSHLLDQTLVAGLGNIYVDEVLWRAQVHPARPSQTLTAEEATAIHDQTIAVLGQAVEKGGSTIRTYTNAFGEDGSMQDFHQVYDKTGQECVRCGTIIEKIQLGGRGTHFCPNCQRRD</sequence>
<protein>
    <recommendedName>
        <fullName evidence="2">Formamidopyrimidine-DNA glycosylase</fullName>
        <shortName evidence="2">Fapy-DNA glycosylase</shortName>
        <ecNumber evidence="2">3.2.2.23</ecNumber>
    </recommendedName>
    <alternativeName>
        <fullName evidence="2">DNA-(apurinic or apyrimidinic site) lyase MutM</fullName>
        <shortName evidence="2">AP lyase MutM</shortName>
        <ecNumber evidence="2">4.2.99.18</ecNumber>
    </alternativeName>
</protein>
<name>FPG_STRR6</name>
<dbReference type="EC" id="3.2.2.23" evidence="2"/>
<dbReference type="EC" id="4.2.99.18" evidence="2"/>
<dbReference type="EMBL" id="AE007317">
    <property type="protein sequence ID" value="AAK99676.1"/>
    <property type="molecule type" value="Genomic_DNA"/>
</dbReference>
<dbReference type="PIR" id="H97980">
    <property type="entry name" value="H97980"/>
</dbReference>
<dbReference type="RefSeq" id="NP_358466.1">
    <property type="nucleotide sequence ID" value="NC_003098.1"/>
</dbReference>
<dbReference type="RefSeq" id="WP_001114579.1">
    <property type="nucleotide sequence ID" value="NC_003098.1"/>
</dbReference>
<dbReference type="SMR" id="Q8DQ33"/>
<dbReference type="STRING" id="171101.spr0872"/>
<dbReference type="KEGG" id="spr:spr0872"/>
<dbReference type="PATRIC" id="fig|171101.6.peg.960"/>
<dbReference type="eggNOG" id="COG0266">
    <property type="taxonomic scope" value="Bacteria"/>
</dbReference>
<dbReference type="HOGENOM" id="CLU_038423_1_2_9"/>
<dbReference type="Proteomes" id="UP000000586">
    <property type="component" value="Chromosome"/>
</dbReference>
<dbReference type="GO" id="GO:0034039">
    <property type="term" value="F:8-oxo-7,8-dihydroguanine DNA N-glycosylase activity"/>
    <property type="evidence" value="ECO:0000318"/>
    <property type="project" value="GO_Central"/>
</dbReference>
<dbReference type="GO" id="GO:0140078">
    <property type="term" value="F:class I DNA-(apurinic or apyrimidinic site) endonuclease activity"/>
    <property type="evidence" value="ECO:0007669"/>
    <property type="project" value="UniProtKB-EC"/>
</dbReference>
<dbReference type="GO" id="GO:0003684">
    <property type="term" value="F:damaged DNA binding"/>
    <property type="evidence" value="ECO:0007669"/>
    <property type="project" value="InterPro"/>
</dbReference>
<dbReference type="GO" id="GO:0003906">
    <property type="term" value="F:DNA-(apurinic or apyrimidinic site) endonuclease activity"/>
    <property type="evidence" value="ECO:0000318"/>
    <property type="project" value="GO_Central"/>
</dbReference>
<dbReference type="GO" id="GO:0008270">
    <property type="term" value="F:zinc ion binding"/>
    <property type="evidence" value="ECO:0007669"/>
    <property type="project" value="UniProtKB-UniRule"/>
</dbReference>
<dbReference type="GO" id="GO:0006284">
    <property type="term" value="P:base-excision repair"/>
    <property type="evidence" value="ECO:0000318"/>
    <property type="project" value="GO_Central"/>
</dbReference>
<dbReference type="CDD" id="cd08966">
    <property type="entry name" value="EcFpg-like_N"/>
    <property type="match status" value="1"/>
</dbReference>
<dbReference type="FunFam" id="1.10.8.50:FF:000003">
    <property type="entry name" value="Formamidopyrimidine-DNA glycosylase"/>
    <property type="match status" value="1"/>
</dbReference>
<dbReference type="FunFam" id="3.20.190.10:FF:000001">
    <property type="entry name" value="Formamidopyrimidine-DNA glycosylase"/>
    <property type="match status" value="1"/>
</dbReference>
<dbReference type="Gene3D" id="1.10.8.50">
    <property type="match status" value="1"/>
</dbReference>
<dbReference type="Gene3D" id="3.20.190.10">
    <property type="entry name" value="MutM-like, N-terminal"/>
    <property type="match status" value="1"/>
</dbReference>
<dbReference type="HAMAP" id="MF_00103">
    <property type="entry name" value="Fapy_DNA_glycosyl"/>
    <property type="match status" value="1"/>
</dbReference>
<dbReference type="InterPro" id="IPR015886">
    <property type="entry name" value="DNA_glyclase/AP_lyase_DNA-bd"/>
</dbReference>
<dbReference type="InterPro" id="IPR015887">
    <property type="entry name" value="DNA_glyclase_Znf_dom_DNA_BS"/>
</dbReference>
<dbReference type="InterPro" id="IPR020629">
    <property type="entry name" value="Formamido-pyr_DNA_Glyclase"/>
</dbReference>
<dbReference type="InterPro" id="IPR012319">
    <property type="entry name" value="FPG_cat"/>
</dbReference>
<dbReference type="InterPro" id="IPR035937">
    <property type="entry name" value="MutM-like_N-ter"/>
</dbReference>
<dbReference type="InterPro" id="IPR010979">
    <property type="entry name" value="Ribosomal_uS13-like_H2TH"/>
</dbReference>
<dbReference type="InterPro" id="IPR000214">
    <property type="entry name" value="Znf_DNA_glyclase/AP_lyase"/>
</dbReference>
<dbReference type="InterPro" id="IPR010663">
    <property type="entry name" value="Znf_FPG/IleRS"/>
</dbReference>
<dbReference type="NCBIfam" id="TIGR00577">
    <property type="entry name" value="fpg"/>
    <property type="match status" value="1"/>
</dbReference>
<dbReference type="NCBIfam" id="NF002211">
    <property type="entry name" value="PRK01103.1"/>
    <property type="match status" value="1"/>
</dbReference>
<dbReference type="PANTHER" id="PTHR22993">
    <property type="entry name" value="FORMAMIDOPYRIMIDINE-DNA GLYCOSYLASE"/>
    <property type="match status" value="1"/>
</dbReference>
<dbReference type="PANTHER" id="PTHR22993:SF9">
    <property type="entry name" value="FORMAMIDOPYRIMIDINE-DNA GLYCOSYLASE"/>
    <property type="match status" value="1"/>
</dbReference>
<dbReference type="Pfam" id="PF01149">
    <property type="entry name" value="Fapy_DNA_glyco"/>
    <property type="match status" value="1"/>
</dbReference>
<dbReference type="Pfam" id="PF06831">
    <property type="entry name" value="H2TH"/>
    <property type="match status" value="1"/>
</dbReference>
<dbReference type="Pfam" id="PF06827">
    <property type="entry name" value="zf-FPG_IleRS"/>
    <property type="match status" value="1"/>
</dbReference>
<dbReference type="SMART" id="SM00898">
    <property type="entry name" value="Fapy_DNA_glyco"/>
    <property type="match status" value="1"/>
</dbReference>
<dbReference type="SMART" id="SM01232">
    <property type="entry name" value="H2TH"/>
    <property type="match status" value="1"/>
</dbReference>
<dbReference type="SUPFAM" id="SSF57716">
    <property type="entry name" value="Glucocorticoid receptor-like (DNA-binding domain)"/>
    <property type="match status" value="1"/>
</dbReference>
<dbReference type="SUPFAM" id="SSF81624">
    <property type="entry name" value="N-terminal domain of MutM-like DNA repair proteins"/>
    <property type="match status" value="1"/>
</dbReference>
<dbReference type="SUPFAM" id="SSF46946">
    <property type="entry name" value="S13-like H2TH domain"/>
    <property type="match status" value="1"/>
</dbReference>
<dbReference type="PROSITE" id="PS51068">
    <property type="entry name" value="FPG_CAT"/>
    <property type="match status" value="1"/>
</dbReference>
<dbReference type="PROSITE" id="PS01242">
    <property type="entry name" value="ZF_FPG_1"/>
    <property type="match status" value="1"/>
</dbReference>
<dbReference type="PROSITE" id="PS51066">
    <property type="entry name" value="ZF_FPG_2"/>
    <property type="match status" value="1"/>
</dbReference>
<comment type="function">
    <text evidence="2">Involved in base excision repair of DNA damaged by oxidation or by mutagenic agents. Acts as a DNA glycosylase that recognizes and removes damaged bases. Has a preference for oxidized purines, such as 7,8-dihydro-8-oxoguanine (8-oxoG). Has AP (apurinic/apyrimidinic) lyase activity and introduces nicks in the DNA strand. Cleaves the DNA backbone by beta-delta elimination to generate a single-strand break at the site of the removed base with both 3'- and 5'-phosphates.</text>
</comment>
<comment type="catalytic activity">
    <reaction evidence="2">
        <text>Hydrolysis of DNA containing ring-opened 7-methylguanine residues, releasing 2,6-diamino-4-hydroxy-5-(N-methyl)formamidopyrimidine.</text>
        <dbReference type="EC" id="3.2.2.23"/>
    </reaction>
</comment>
<comment type="catalytic activity">
    <reaction evidence="2">
        <text>2'-deoxyribonucleotide-(2'-deoxyribose 5'-phosphate)-2'-deoxyribonucleotide-DNA = a 3'-end 2'-deoxyribonucleotide-(2,3-dehydro-2,3-deoxyribose 5'-phosphate)-DNA + a 5'-end 5'-phospho-2'-deoxyribonucleoside-DNA + H(+)</text>
        <dbReference type="Rhea" id="RHEA:66592"/>
        <dbReference type="Rhea" id="RHEA-COMP:13180"/>
        <dbReference type="Rhea" id="RHEA-COMP:16897"/>
        <dbReference type="Rhea" id="RHEA-COMP:17067"/>
        <dbReference type="ChEBI" id="CHEBI:15378"/>
        <dbReference type="ChEBI" id="CHEBI:136412"/>
        <dbReference type="ChEBI" id="CHEBI:157695"/>
        <dbReference type="ChEBI" id="CHEBI:167181"/>
        <dbReference type="EC" id="4.2.99.18"/>
    </reaction>
</comment>
<comment type="cofactor">
    <cofactor evidence="2">
        <name>Zn(2+)</name>
        <dbReference type="ChEBI" id="CHEBI:29105"/>
    </cofactor>
    <text evidence="2">Binds 1 zinc ion per subunit.</text>
</comment>
<comment type="subunit">
    <text evidence="2">Monomer.</text>
</comment>
<comment type="similarity">
    <text evidence="2">Belongs to the FPG family.</text>
</comment>
<gene>
    <name evidence="2" type="primary">mutM</name>
    <name evidence="2" type="synonym">fpg</name>
    <name type="ordered locus">spr0872</name>
</gene>
<evidence type="ECO:0000250" key="1"/>
<evidence type="ECO:0000255" key="2">
    <source>
        <dbReference type="HAMAP-Rule" id="MF_00103"/>
    </source>
</evidence>
<feature type="initiator methionine" description="Removed" evidence="1">
    <location>
        <position position="1"/>
    </location>
</feature>
<feature type="chain" id="PRO_0000170870" description="Formamidopyrimidine-DNA glycosylase">
    <location>
        <begin position="2"/>
        <end position="274"/>
    </location>
</feature>
<feature type="zinc finger region" description="FPG-type" evidence="2">
    <location>
        <begin position="238"/>
        <end position="272"/>
    </location>
</feature>
<feature type="active site" description="Schiff-base intermediate with DNA" evidence="2">
    <location>
        <position position="2"/>
    </location>
</feature>
<feature type="active site" description="Proton donor" evidence="2">
    <location>
        <position position="3"/>
    </location>
</feature>
<feature type="active site" description="Proton donor; for beta-elimination activity" evidence="2">
    <location>
        <position position="58"/>
    </location>
</feature>
<feature type="active site" description="Proton donor; for delta-elimination activity" evidence="2">
    <location>
        <position position="262"/>
    </location>
</feature>
<feature type="binding site" evidence="2">
    <location>
        <position position="91"/>
    </location>
    <ligand>
        <name>DNA</name>
        <dbReference type="ChEBI" id="CHEBI:16991"/>
    </ligand>
</feature>
<feature type="binding site" evidence="2">
    <location>
        <position position="110"/>
    </location>
    <ligand>
        <name>DNA</name>
        <dbReference type="ChEBI" id="CHEBI:16991"/>
    </ligand>
</feature>
<proteinExistence type="inferred from homology"/>
<reference key="1">
    <citation type="journal article" date="2001" name="J. Bacteriol.">
        <title>Genome of the bacterium Streptococcus pneumoniae strain R6.</title>
        <authorList>
            <person name="Hoskins J."/>
            <person name="Alborn W.E. Jr."/>
            <person name="Arnold J."/>
            <person name="Blaszczak L.C."/>
            <person name="Burgett S."/>
            <person name="DeHoff B.S."/>
            <person name="Estrem S.T."/>
            <person name="Fritz L."/>
            <person name="Fu D.-J."/>
            <person name="Fuller W."/>
            <person name="Geringer C."/>
            <person name="Gilmour R."/>
            <person name="Glass J.S."/>
            <person name="Khoja H."/>
            <person name="Kraft A.R."/>
            <person name="Lagace R.E."/>
            <person name="LeBlanc D.J."/>
            <person name="Lee L.N."/>
            <person name="Lefkowitz E.J."/>
            <person name="Lu J."/>
            <person name="Matsushima P."/>
            <person name="McAhren S.M."/>
            <person name="McHenney M."/>
            <person name="McLeaster K."/>
            <person name="Mundy C.W."/>
            <person name="Nicas T.I."/>
            <person name="Norris F.H."/>
            <person name="O'Gara M."/>
            <person name="Peery R.B."/>
            <person name="Robertson G.T."/>
            <person name="Rockey P."/>
            <person name="Sun P.-M."/>
            <person name="Winkler M.E."/>
            <person name="Yang Y."/>
            <person name="Young-Bellido M."/>
            <person name="Zhao G."/>
            <person name="Zook C.A."/>
            <person name="Baltz R.H."/>
            <person name="Jaskunas S.R."/>
            <person name="Rosteck P.R. Jr."/>
            <person name="Skatrud P.L."/>
            <person name="Glass J.I."/>
        </authorList>
    </citation>
    <scope>NUCLEOTIDE SEQUENCE [LARGE SCALE GENOMIC DNA]</scope>
    <source>
        <strain>ATCC BAA-255 / R6</strain>
    </source>
</reference>
<accession>Q8DQ33</accession>
<keyword id="KW-0227">DNA damage</keyword>
<keyword id="KW-0234">DNA repair</keyword>
<keyword id="KW-0238">DNA-binding</keyword>
<keyword id="KW-0326">Glycosidase</keyword>
<keyword id="KW-0378">Hydrolase</keyword>
<keyword id="KW-0456">Lyase</keyword>
<keyword id="KW-0479">Metal-binding</keyword>
<keyword id="KW-0511">Multifunctional enzyme</keyword>
<keyword id="KW-1185">Reference proteome</keyword>
<keyword id="KW-0862">Zinc</keyword>
<keyword id="KW-0863">Zinc-finger</keyword>